<comment type="function">
    <text evidence="3">Odorant receptor.</text>
</comment>
<comment type="subcellular location">
    <subcellularLocation>
        <location>Cell membrane</location>
        <topology>Multi-pass membrane protein</topology>
    </subcellularLocation>
</comment>
<comment type="similarity">
    <text evidence="2">Belongs to the G-protein coupled receptor 1 family.</text>
</comment>
<comment type="online information" name="Human Olfactory Receptor Data Exploratorium (HORDE)">
    <link uri="http://genome.weizmann.ac.il/horde/card/index/symbol:OR4Q3"/>
</comment>
<name>OR4Q3_HUMAN</name>
<evidence type="ECO:0000255" key="1"/>
<evidence type="ECO:0000255" key="2">
    <source>
        <dbReference type="PROSITE-ProRule" id="PRU00521"/>
    </source>
</evidence>
<evidence type="ECO:0000305" key="3"/>
<organism>
    <name type="scientific">Homo sapiens</name>
    <name type="common">Human</name>
    <dbReference type="NCBI Taxonomy" id="9606"/>
    <lineage>
        <taxon>Eukaryota</taxon>
        <taxon>Metazoa</taxon>
        <taxon>Chordata</taxon>
        <taxon>Craniata</taxon>
        <taxon>Vertebrata</taxon>
        <taxon>Euteleostomi</taxon>
        <taxon>Mammalia</taxon>
        <taxon>Eutheria</taxon>
        <taxon>Euarchontoglires</taxon>
        <taxon>Primates</taxon>
        <taxon>Haplorrhini</taxon>
        <taxon>Catarrhini</taxon>
        <taxon>Hominidae</taxon>
        <taxon>Homo</taxon>
    </lineage>
</organism>
<proteinExistence type="inferred from homology"/>
<accession>Q8NH05</accession>
<accession>Q6IEX4</accession>
<feature type="chain" id="PRO_0000150567" description="Olfactory receptor 4Q3">
    <location>
        <begin position="1"/>
        <end position="313"/>
    </location>
</feature>
<feature type="topological domain" description="Extracellular" evidence="1">
    <location>
        <begin position="1"/>
        <end position="25"/>
    </location>
</feature>
<feature type="transmembrane region" description="Helical; Name=1" evidence="1">
    <location>
        <begin position="26"/>
        <end position="49"/>
    </location>
</feature>
<feature type="topological domain" description="Cytoplasmic" evidence="1">
    <location>
        <begin position="50"/>
        <end position="58"/>
    </location>
</feature>
<feature type="transmembrane region" description="Helical; Name=2" evidence="1">
    <location>
        <begin position="59"/>
        <end position="80"/>
    </location>
</feature>
<feature type="topological domain" description="Extracellular" evidence="1">
    <location>
        <begin position="81"/>
        <end position="101"/>
    </location>
</feature>
<feature type="transmembrane region" description="Helical; Name=3" evidence="1">
    <location>
        <begin position="102"/>
        <end position="121"/>
    </location>
</feature>
<feature type="topological domain" description="Cytoplasmic" evidence="1">
    <location>
        <begin position="122"/>
        <end position="140"/>
    </location>
</feature>
<feature type="transmembrane region" description="Helical; Name=4" evidence="1">
    <location>
        <begin position="141"/>
        <end position="159"/>
    </location>
</feature>
<feature type="topological domain" description="Extracellular" evidence="1">
    <location>
        <begin position="160"/>
        <end position="196"/>
    </location>
</feature>
<feature type="transmembrane region" description="Helical; Name=5" evidence="1">
    <location>
        <begin position="197"/>
        <end position="220"/>
    </location>
</feature>
<feature type="topological domain" description="Cytoplasmic" evidence="1">
    <location>
        <begin position="221"/>
        <end position="236"/>
    </location>
</feature>
<feature type="transmembrane region" description="Helical; Name=6" evidence="1">
    <location>
        <begin position="237"/>
        <end position="259"/>
    </location>
</feature>
<feature type="topological domain" description="Extracellular" evidence="1">
    <location>
        <begin position="260"/>
        <end position="270"/>
    </location>
</feature>
<feature type="transmembrane region" description="Helical; Name=7" evidence="1">
    <location>
        <begin position="271"/>
        <end position="290"/>
    </location>
</feature>
<feature type="topological domain" description="Cytoplasmic" evidence="1">
    <location>
        <begin position="291"/>
        <end position="313"/>
    </location>
</feature>
<feature type="glycosylation site" description="N-linked (GlcNAc...) asparagine" evidence="1">
    <location>
        <position position="8"/>
    </location>
</feature>
<feature type="disulfide bond" evidence="2">
    <location>
        <begin position="98"/>
        <end position="190"/>
    </location>
</feature>
<feature type="sequence variant" id="VAR_053176" description="In dbSNP:rs17210864.">
    <original>T</original>
    <variation>A</variation>
    <location>
        <position position="135"/>
    </location>
</feature>
<feature type="sequence variant" id="VAR_053177" description="In dbSNP:rs12896533.">
    <original>F</original>
    <variation>L</variation>
    <location>
        <position position="238"/>
    </location>
</feature>
<sequence>MKKEQDSNVTEFVLLGLSSSWELQLFLFLLFLFFYIAIVLGNLLIVVTVQAHAHLLQSPMYYFLGHLSFIDLCLSCVTVPKMLGDFLQQGKSISFSGCLAQIYFLHFLGASEMFLLTVMAYDRYVAICNPLRYLTVMNPQLCLWLVLACWCGGFIHSIMQVILVIQLPFCGPNELDNFYCDVPQVIKLACMDTYVVEVLVIANSGLLSLVCFLVLLFSYAIILITLRTHFCQGQNKVFSTCASHLTVVSLIFVPCVFIYLRPFCSFSVDKIFSLFYTVITPMLNPLIYTLRNTDMKTAMKKLRIKPCGIPLPC</sequence>
<reference key="1">
    <citation type="submission" date="2001-07" db="EMBL/GenBank/DDBJ databases">
        <title>Genome-wide discovery and analysis of human seven transmembrane helix receptor genes.</title>
        <authorList>
            <person name="Suwa M."/>
            <person name="Sato T."/>
            <person name="Okouchi I."/>
            <person name="Arita M."/>
            <person name="Futami K."/>
            <person name="Matsumoto S."/>
            <person name="Tsutsumi S."/>
            <person name="Aburatani H."/>
            <person name="Asai K."/>
            <person name="Akiyama Y."/>
        </authorList>
    </citation>
    <scope>NUCLEOTIDE SEQUENCE [GENOMIC DNA]</scope>
</reference>
<reference key="2">
    <citation type="journal article" date="2004" name="Proc. Natl. Acad. Sci. U.S.A.">
        <title>The human olfactory receptor gene family.</title>
        <authorList>
            <person name="Malnic B."/>
            <person name="Godfrey P.A."/>
            <person name="Buck L.B."/>
        </authorList>
    </citation>
    <scope>IDENTIFICATION</scope>
</reference>
<reference key="3">
    <citation type="journal article" date="2004" name="Proc. Natl. Acad. Sci. U.S.A.">
        <authorList>
            <person name="Malnic B."/>
            <person name="Godfrey P.A."/>
            <person name="Buck L.B."/>
        </authorList>
    </citation>
    <scope>ERRATUM OF PUBMED:14983052</scope>
</reference>
<gene>
    <name type="primary">OR4Q3</name>
    <name type="synonym">C14orf13</name>
    <name type="synonym">OR4Q4</name>
</gene>
<protein>
    <recommendedName>
        <fullName>Olfactory receptor 4Q3</fullName>
    </recommendedName>
    <alternativeName>
        <fullName>Olfactory receptor 4Q4</fullName>
    </alternativeName>
    <alternativeName>
        <fullName>Olfactory receptor OR14-3</fullName>
    </alternativeName>
</protein>
<keyword id="KW-1003">Cell membrane</keyword>
<keyword id="KW-1015">Disulfide bond</keyword>
<keyword id="KW-0297">G-protein coupled receptor</keyword>
<keyword id="KW-0325">Glycoprotein</keyword>
<keyword id="KW-0472">Membrane</keyword>
<keyword id="KW-0552">Olfaction</keyword>
<keyword id="KW-0675">Receptor</keyword>
<keyword id="KW-1185">Reference proteome</keyword>
<keyword id="KW-0716">Sensory transduction</keyword>
<keyword id="KW-0807">Transducer</keyword>
<keyword id="KW-0812">Transmembrane</keyword>
<keyword id="KW-1133">Transmembrane helix</keyword>
<dbReference type="EMBL" id="AB065609">
    <property type="protein sequence ID" value="BAC05836.1"/>
    <property type="molecule type" value="Genomic_DNA"/>
</dbReference>
<dbReference type="EMBL" id="BK004488">
    <property type="protein sequence ID" value="DAA04886.1"/>
    <property type="molecule type" value="Genomic_DNA"/>
</dbReference>
<dbReference type="RefSeq" id="NP_751944.1">
    <property type="nucleotide sequence ID" value="NM_172194.1"/>
</dbReference>
<dbReference type="SMR" id="Q8NH05"/>
<dbReference type="BioGRID" id="137666">
    <property type="interactions" value="2"/>
</dbReference>
<dbReference type="FunCoup" id="Q8NH05">
    <property type="interactions" value="459"/>
</dbReference>
<dbReference type="IntAct" id="Q8NH05">
    <property type="interactions" value="2"/>
</dbReference>
<dbReference type="STRING" id="9606.ENSP00000330049"/>
<dbReference type="GlyCosmos" id="Q8NH05">
    <property type="glycosylation" value="1 site, No reported glycans"/>
</dbReference>
<dbReference type="GlyGen" id="Q8NH05">
    <property type="glycosylation" value="1 site"/>
</dbReference>
<dbReference type="BioMuta" id="OR4Q3"/>
<dbReference type="DMDM" id="38372800"/>
<dbReference type="PaxDb" id="9606-ENSP00000330049"/>
<dbReference type="ProteomicsDB" id="73641"/>
<dbReference type="DNASU" id="441669"/>
<dbReference type="GeneID" id="441669"/>
<dbReference type="KEGG" id="hsa:441669"/>
<dbReference type="UCSC" id="uc010tkt.2">
    <property type="organism name" value="human"/>
</dbReference>
<dbReference type="AGR" id="HGNC:15426"/>
<dbReference type="CTD" id="441669"/>
<dbReference type="DisGeNET" id="441669"/>
<dbReference type="GeneCards" id="OR4Q3"/>
<dbReference type="HGNC" id="HGNC:15426">
    <property type="gene designation" value="OR4Q3"/>
</dbReference>
<dbReference type="neXtProt" id="NX_Q8NH05"/>
<dbReference type="PharmGKB" id="PA32340"/>
<dbReference type="eggNOG" id="ENOG502QVQ8">
    <property type="taxonomic scope" value="Eukaryota"/>
</dbReference>
<dbReference type="HOGENOM" id="CLU_012526_8_1_1"/>
<dbReference type="InParanoid" id="Q8NH05"/>
<dbReference type="OrthoDB" id="10017003at2759"/>
<dbReference type="PAN-GO" id="Q8NH05">
    <property type="GO annotations" value="2 GO annotations based on evolutionary models"/>
</dbReference>
<dbReference type="PhylomeDB" id="Q8NH05"/>
<dbReference type="TreeFam" id="TF337350"/>
<dbReference type="PathwayCommons" id="Q8NH05"/>
<dbReference type="Reactome" id="R-HSA-381753">
    <property type="pathway name" value="Olfactory Signaling Pathway"/>
</dbReference>
<dbReference type="Reactome" id="R-HSA-9752946">
    <property type="pathway name" value="Expression and translocation of olfactory receptors"/>
</dbReference>
<dbReference type="BioGRID-ORCS" id="441669">
    <property type="hits" value="9 hits in 712 CRISPR screens"/>
</dbReference>
<dbReference type="GeneWiki" id="OR4Q3"/>
<dbReference type="GenomeRNAi" id="441669"/>
<dbReference type="Pharos" id="Q8NH05">
    <property type="development level" value="Tbio"/>
</dbReference>
<dbReference type="PRO" id="PR:Q8NH05"/>
<dbReference type="Proteomes" id="UP000005640">
    <property type="component" value="Chromosome 14"/>
</dbReference>
<dbReference type="RNAct" id="Q8NH05">
    <property type="molecule type" value="protein"/>
</dbReference>
<dbReference type="GO" id="GO:0005886">
    <property type="term" value="C:plasma membrane"/>
    <property type="evidence" value="ECO:0000318"/>
    <property type="project" value="GO_Central"/>
</dbReference>
<dbReference type="GO" id="GO:0004930">
    <property type="term" value="F:G protein-coupled receptor activity"/>
    <property type="evidence" value="ECO:0007669"/>
    <property type="project" value="UniProtKB-KW"/>
</dbReference>
<dbReference type="GO" id="GO:0004984">
    <property type="term" value="F:olfactory receptor activity"/>
    <property type="evidence" value="ECO:0000318"/>
    <property type="project" value="GO_Central"/>
</dbReference>
<dbReference type="CDD" id="cd15935">
    <property type="entry name" value="7tmA_OR4Q3-like"/>
    <property type="match status" value="1"/>
</dbReference>
<dbReference type="FunFam" id="1.20.1070.10:FF:000007">
    <property type="entry name" value="Olfactory receptor"/>
    <property type="match status" value="1"/>
</dbReference>
<dbReference type="Gene3D" id="1.20.1070.10">
    <property type="entry name" value="Rhodopsin 7-helix transmembrane proteins"/>
    <property type="match status" value="1"/>
</dbReference>
<dbReference type="InterPro" id="IPR000276">
    <property type="entry name" value="GPCR_Rhodpsn"/>
</dbReference>
<dbReference type="InterPro" id="IPR017452">
    <property type="entry name" value="GPCR_Rhodpsn_7TM"/>
</dbReference>
<dbReference type="InterPro" id="IPR000725">
    <property type="entry name" value="Olfact_rcpt"/>
</dbReference>
<dbReference type="InterPro" id="IPR050427">
    <property type="entry name" value="Olfactory_Receptors"/>
</dbReference>
<dbReference type="PANTHER" id="PTHR48002">
    <property type="entry name" value="OLFACTORY RECEPTOR"/>
    <property type="match status" value="1"/>
</dbReference>
<dbReference type="Pfam" id="PF13853">
    <property type="entry name" value="7tm_4"/>
    <property type="match status" value="1"/>
</dbReference>
<dbReference type="PRINTS" id="PR00237">
    <property type="entry name" value="GPCRRHODOPSN"/>
</dbReference>
<dbReference type="PRINTS" id="PR00245">
    <property type="entry name" value="OLFACTORYR"/>
</dbReference>
<dbReference type="SUPFAM" id="SSF81321">
    <property type="entry name" value="Family A G protein-coupled receptor-like"/>
    <property type="match status" value="1"/>
</dbReference>
<dbReference type="PROSITE" id="PS00237">
    <property type="entry name" value="G_PROTEIN_RECEP_F1_1"/>
    <property type="match status" value="1"/>
</dbReference>
<dbReference type="PROSITE" id="PS50262">
    <property type="entry name" value="G_PROTEIN_RECEP_F1_2"/>
    <property type="match status" value="1"/>
</dbReference>